<feature type="chain" id="PRO_0000291017" description="NAD(P)H dehydrogenase (quinone)">
    <location>
        <begin position="1"/>
        <end position="198"/>
    </location>
</feature>
<feature type="domain" description="Flavodoxin-like" evidence="1">
    <location>
        <begin position="4"/>
        <end position="189"/>
    </location>
</feature>
<feature type="binding site" evidence="1">
    <location>
        <begin position="10"/>
        <end position="15"/>
    </location>
    <ligand>
        <name>FMN</name>
        <dbReference type="ChEBI" id="CHEBI:58210"/>
    </ligand>
</feature>
<feature type="binding site" evidence="1">
    <location>
        <position position="12"/>
    </location>
    <ligand>
        <name>NAD(+)</name>
        <dbReference type="ChEBI" id="CHEBI:57540"/>
    </ligand>
</feature>
<feature type="binding site" evidence="1">
    <location>
        <begin position="78"/>
        <end position="80"/>
    </location>
    <ligand>
        <name>FMN</name>
        <dbReference type="ChEBI" id="CHEBI:58210"/>
    </ligand>
</feature>
<feature type="binding site" evidence="1">
    <location>
        <position position="98"/>
    </location>
    <ligand>
        <name>substrate</name>
    </ligand>
</feature>
<feature type="binding site" evidence="1">
    <location>
        <begin position="113"/>
        <end position="118"/>
    </location>
    <ligand>
        <name>FMN</name>
        <dbReference type="ChEBI" id="CHEBI:58210"/>
    </ligand>
</feature>
<feature type="binding site" evidence="1">
    <location>
        <position position="133"/>
    </location>
    <ligand>
        <name>FMN</name>
        <dbReference type="ChEBI" id="CHEBI:58210"/>
    </ligand>
</feature>
<organism>
    <name type="scientific">Halorhodospira halophila (strain DSM 244 / SL1)</name>
    <name type="common">Ectothiorhodospira halophila (strain DSM 244 / SL1)</name>
    <dbReference type="NCBI Taxonomy" id="349124"/>
    <lineage>
        <taxon>Bacteria</taxon>
        <taxon>Pseudomonadati</taxon>
        <taxon>Pseudomonadota</taxon>
        <taxon>Gammaproteobacteria</taxon>
        <taxon>Chromatiales</taxon>
        <taxon>Ectothiorhodospiraceae</taxon>
        <taxon>Halorhodospira</taxon>
    </lineage>
</organism>
<accession>A1WUN2</accession>
<comment type="catalytic activity">
    <reaction evidence="1">
        <text>a quinone + NADH + H(+) = a quinol + NAD(+)</text>
        <dbReference type="Rhea" id="RHEA:46160"/>
        <dbReference type="ChEBI" id="CHEBI:15378"/>
        <dbReference type="ChEBI" id="CHEBI:24646"/>
        <dbReference type="ChEBI" id="CHEBI:57540"/>
        <dbReference type="ChEBI" id="CHEBI:57945"/>
        <dbReference type="ChEBI" id="CHEBI:132124"/>
        <dbReference type="EC" id="1.6.5.2"/>
    </reaction>
</comment>
<comment type="catalytic activity">
    <reaction evidence="1">
        <text>a quinone + NADPH + H(+) = a quinol + NADP(+)</text>
        <dbReference type="Rhea" id="RHEA:46164"/>
        <dbReference type="ChEBI" id="CHEBI:15378"/>
        <dbReference type="ChEBI" id="CHEBI:24646"/>
        <dbReference type="ChEBI" id="CHEBI:57783"/>
        <dbReference type="ChEBI" id="CHEBI:58349"/>
        <dbReference type="ChEBI" id="CHEBI:132124"/>
        <dbReference type="EC" id="1.6.5.2"/>
    </reaction>
</comment>
<comment type="cofactor">
    <cofactor evidence="1">
        <name>FMN</name>
        <dbReference type="ChEBI" id="CHEBI:58210"/>
    </cofactor>
    <text evidence="1">Binds 1 FMN per monomer.</text>
</comment>
<comment type="similarity">
    <text evidence="1">Belongs to the WrbA family.</text>
</comment>
<reference key="1">
    <citation type="submission" date="2006-12" db="EMBL/GenBank/DDBJ databases">
        <title>Complete sequence of Halorhodospira halophila SL1.</title>
        <authorList>
            <consortium name="US DOE Joint Genome Institute"/>
            <person name="Copeland A."/>
            <person name="Lucas S."/>
            <person name="Lapidus A."/>
            <person name="Barry K."/>
            <person name="Detter J.C."/>
            <person name="Glavina del Rio T."/>
            <person name="Hammon N."/>
            <person name="Israni S."/>
            <person name="Dalin E."/>
            <person name="Tice H."/>
            <person name="Pitluck S."/>
            <person name="Saunders E."/>
            <person name="Brettin T."/>
            <person name="Bruce D."/>
            <person name="Han C."/>
            <person name="Tapia R."/>
            <person name="Schmutz J."/>
            <person name="Larimer F."/>
            <person name="Land M."/>
            <person name="Hauser L."/>
            <person name="Kyrpides N."/>
            <person name="Mikhailova N."/>
            <person name="Hoff W."/>
            <person name="Richardson P."/>
        </authorList>
    </citation>
    <scope>NUCLEOTIDE SEQUENCE [LARGE SCALE GENOMIC DNA]</scope>
    <source>
        <strain>DSM 244 / SL1</strain>
    </source>
</reference>
<gene>
    <name type="ordered locus">Hhal_0608</name>
</gene>
<keyword id="KW-0285">Flavoprotein</keyword>
<keyword id="KW-0288">FMN</keyword>
<keyword id="KW-0520">NAD</keyword>
<keyword id="KW-0521">NADP</keyword>
<keyword id="KW-0547">Nucleotide-binding</keyword>
<keyword id="KW-0560">Oxidoreductase</keyword>
<keyword id="KW-1185">Reference proteome</keyword>
<sequence>MSKVLVLYYSMYGHVETLAQAVAEGARGAGSEVVIKRVPETMPEDVARQAGAKLDQEAPVASLEELADYDAILFGTPTRFGNMAGQMRNFLDQTGSLWFNGQLIGKVGSVFTSTGTGGGNETTITSFWHTLAHHGMVIVGLSYAAPELADLSVVKGGSPYGAGTIAGGDGSRQPNEQELALARYQGRHVAEIAQRLHG</sequence>
<dbReference type="EC" id="1.6.5.2" evidence="1"/>
<dbReference type="EMBL" id="CP000544">
    <property type="protein sequence ID" value="ABM61394.1"/>
    <property type="molecule type" value="Genomic_DNA"/>
</dbReference>
<dbReference type="RefSeq" id="WP_011813417.1">
    <property type="nucleotide sequence ID" value="NC_008789.1"/>
</dbReference>
<dbReference type="SMR" id="A1WUN2"/>
<dbReference type="STRING" id="349124.Hhal_0608"/>
<dbReference type="KEGG" id="hha:Hhal_0608"/>
<dbReference type="eggNOG" id="COG0655">
    <property type="taxonomic scope" value="Bacteria"/>
</dbReference>
<dbReference type="HOGENOM" id="CLU_051402_0_2_6"/>
<dbReference type="OrthoDB" id="9801479at2"/>
<dbReference type="Proteomes" id="UP000000647">
    <property type="component" value="Chromosome"/>
</dbReference>
<dbReference type="GO" id="GO:0016020">
    <property type="term" value="C:membrane"/>
    <property type="evidence" value="ECO:0007669"/>
    <property type="project" value="TreeGrafter"/>
</dbReference>
<dbReference type="GO" id="GO:0050660">
    <property type="term" value="F:flavin adenine dinucleotide binding"/>
    <property type="evidence" value="ECO:0007669"/>
    <property type="project" value="UniProtKB-UniRule"/>
</dbReference>
<dbReference type="GO" id="GO:0010181">
    <property type="term" value="F:FMN binding"/>
    <property type="evidence" value="ECO:0007669"/>
    <property type="project" value="InterPro"/>
</dbReference>
<dbReference type="GO" id="GO:0051287">
    <property type="term" value="F:NAD binding"/>
    <property type="evidence" value="ECO:0007669"/>
    <property type="project" value="UniProtKB-UniRule"/>
</dbReference>
<dbReference type="GO" id="GO:0050136">
    <property type="term" value="F:NADH:ubiquinone reductase (non-electrogenic) activity"/>
    <property type="evidence" value="ECO:0007669"/>
    <property type="project" value="RHEA"/>
</dbReference>
<dbReference type="GO" id="GO:0050661">
    <property type="term" value="F:NADP binding"/>
    <property type="evidence" value="ECO:0007669"/>
    <property type="project" value="UniProtKB-UniRule"/>
</dbReference>
<dbReference type="GO" id="GO:0008753">
    <property type="term" value="F:NADPH dehydrogenase (quinone) activity"/>
    <property type="evidence" value="ECO:0007669"/>
    <property type="project" value="RHEA"/>
</dbReference>
<dbReference type="FunFam" id="3.40.50.360:FF:000001">
    <property type="entry name" value="NAD(P)H dehydrogenase (Quinone) FQR1-like"/>
    <property type="match status" value="1"/>
</dbReference>
<dbReference type="Gene3D" id="3.40.50.360">
    <property type="match status" value="1"/>
</dbReference>
<dbReference type="HAMAP" id="MF_01017">
    <property type="entry name" value="NQOR"/>
    <property type="match status" value="1"/>
</dbReference>
<dbReference type="InterPro" id="IPR008254">
    <property type="entry name" value="Flavodoxin/NO_synth"/>
</dbReference>
<dbReference type="InterPro" id="IPR029039">
    <property type="entry name" value="Flavoprotein-like_sf"/>
</dbReference>
<dbReference type="InterPro" id="IPR010089">
    <property type="entry name" value="Flavoprotein_WrbA-like"/>
</dbReference>
<dbReference type="InterPro" id="IPR005025">
    <property type="entry name" value="FMN_Rdtase-like_dom"/>
</dbReference>
<dbReference type="InterPro" id="IPR037513">
    <property type="entry name" value="NQO"/>
</dbReference>
<dbReference type="NCBIfam" id="TIGR01755">
    <property type="entry name" value="flav_wrbA"/>
    <property type="match status" value="1"/>
</dbReference>
<dbReference type="NCBIfam" id="NF002999">
    <property type="entry name" value="PRK03767.1"/>
    <property type="match status" value="1"/>
</dbReference>
<dbReference type="PANTHER" id="PTHR30546">
    <property type="entry name" value="FLAVODOXIN-RELATED PROTEIN WRBA-RELATED"/>
    <property type="match status" value="1"/>
</dbReference>
<dbReference type="PANTHER" id="PTHR30546:SF23">
    <property type="entry name" value="FLAVOPROTEIN-LIKE PROTEIN YCP4-RELATED"/>
    <property type="match status" value="1"/>
</dbReference>
<dbReference type="Pfam" id="PF03358">
    <property type="entry name" value="FMN_red"/>
    <property type="match status" value="1"/>
</dbReference>
<dbReference type="SUPFAM" id="SSF52218">
    <property type="entry name" value="Flavoproteins"/>
    <property type="match status" value="1"/>
</dbReference>
<dbReference type="PROSITE" id="PS50902">
    <property type="entry name" value="FLAVODOXIN_LIKE"/>
    <property type="match status" value="1"/>
</dbReference>
<name>NQOR_HALHL</name>
<proteinExistence type="inferred from homology"/>
<protein>
    <recommendedName>
        <fullName evidence="1">NAD(P)H dehydrogenase (quinone)</fullName>
        <ecNumber evidence="1">1.6.5.2</ecNumber>
    </recommendedName>
    <alternativeName>
        <fullName>Flavoprotein WrbA</fullName>
    </alternativeName>
    <alternativeName>
        <fullName evidence="1">NAD(P)H:quinone oxidoreductase</fullName>
        <shortName evidence="1">NQO</shortName>
    </alternativeName>
</protein>
<evidence type="ECO:0000255" key="1">
    <source>
        <dbReference type="HAMAP-Rule" id="MF_01017"/>
    </source>
</evidence>